<proteinExistence type="inferred from homology"/>
<comment type="catalytic activity">
    <reaction evidence="1">
        <text>tRNA(Arg) + L-arginine + ATP = L-arginyl-tRNA(Arg) + AMP + diphosphate</text>
        <dbReference type="Rhea" id="RHEA:20301"/>
        <dbReference type="Rhea" id="RHEA-COMP:9658"/>
        <dbReference type="Rhea" id="RHEA-COMP:9673"/>
        <dbReference type="ChEBI" id="CHEBI:30616"/>
        <dbReference type="ChEBI" id="CHEBI:32682"/>
        <dbReference type="ChEBI" id="CHEBI:33019"/>
        <dbReference type="ChEBI" id="CHEBI:78442"/>
        <dbReference type="ChEBI" id="CHEBI:78513"/>
        <dbReference type="ChEBI" id="CHEBI:456215"/>
        <dbReference type="EC" id="6.1.1.19"/>
    </reaction>
</comment>
<comment type="subunit">
    <text evidence="1">Monomer.</text>
</comment>
<comment type="subcellular location">
    <subcellularLocation>
        <location evidence="1">Cytoplasm</location>
    </subcellularLocation>
</comment>
<comment type="similarity">
    <text evidence="1">Belongs to the class-I aminoacyl-tRNA synthetase family.</text>
</comment>
<name>SYR_SHESH</name>
<gene>
    <name evidence="1" type="primary">argS</name>
    <name type="ordered locus">Ssed_0533</name>
</gene>
<protein>
    <recommendedName>
        <fullName evidence="1">Arginine--tRNA ligase</fullName>
        <ecNumber evidence="1">6.1.1.19</ecNumber>
    </recommendedName>
    <alternativeName>
        <fullName evidence="1">Arginyl-tRNA synthetase</fullName>
        <shortName evidence="1">ArgRS</shortName>
    </alternativeName>
</protein>
<keyword id="KW-0030">Aminoacyl-tRNA synthetase</keyword>
<keyword id="KW-0067">ATP-binding</keyword>
<keyword id="KW-0963">Cytoplasm</keyword>
<keyword id="KW-0436">Ligase</keyword>
<keyword id="KW-0547">Nucleotide-binding</keyword>
<keyword id="KW-0648">Protein biosynthesis</keyword>
<keyword id="KW-1185">Reference proteome</keyword>
<feature type="chain" id="PRO_1000076232" description="Arginine--tRNA ligase">
    <location>
        <begin position="1"/>
        <end position="581"/>
    </location>
</feature>
<feature type="short sequence motif" description="'HIGH' region">
    <location>
        <begin position="126"/>
        <end position="136"/>
    </location>
</feature>
<organism>
    <name type="scientific">Shewanella sediminis (strain HAW-EB3)</name>
    <dbReference type="NCBI Taxonomy" id="425104"/>
    <lineage>
        <taxon>Bacteria</taxon>
        <taxon>Pseudomonadati</taxon>
        <taxon>Pseudomonadota</taxon>
        <taxon>Gammaproteobacteria</taxon>
        <taxon>Alteromonadales</taxon>
        <taxon>Shewanellaceae</taxon>
        <taxon>Shewanella</taxon>
    </lineage>
</organism>
<accession>A8FQM2</accession>
<reference key="1">
    <citation type="submission" date="2007-08" db="EMBL/GenBank/DDBJ databases">
        <title>Complete sequence of Shewanella sediminis HAW-EB3.</title>
        <authorList>
            <consortium name="US DOE Joint Genome Institute"/>
            <person name="Copeland A."/>
            <person name="Lucas S."/>
            <person name="Lapidus A."/>
            <person name="Barry K."/>
            <person name="Glavina del Rio T."/>
            <person name="Dalin E."/>
            <person name="Tice H."/>
            <person name="Pitluck S."/>
            <person name="Chertkov O."/>
            <person name="Brettin T."/>
            <person name="Bruce D."/>
            <person name="Detter J.C."/>
            <person name="Han C."/>
            <person name="Schmutz J."/>
            <person name="Larimer F."/>
            <person name="Land M."/>
            <person name="Hauser L."/>
            <person name="Kyrpides N."/>
            <person name="Kim E."/>
            <person name="Zhao J.-S."/>
            <person name="Richardson P."/>
        </authorList>
    </citation>
    <scope>NUCLEOTIDE SEQUENCE [LARGE SCALE GENOMIC DNA]</scope>
    <source>
        <strain>HAW-EB3</strain>
    </source>
</reference>
<sequence length="581" mass="65066">MKSHIQSLLIQALDALKQQGVIPTDFEARVQVDRTKDKTHGDFATNLAMMLTKVARKNPRELAQLIIDSLPQDSQVAKVEIAGPGFINFFIDENALASQLMAALNDDHLGIQLPEPQTVVVDYSSPNLAKEMHVGHLRSTIIGDSVVRALEFQGHNVIRQNHVGDWGTQFGMLLAYMEELRAENGEQAQMELSDLETFYRAAKVRFDESEDFAIRARKLVVSLQSGDEYCNKLWREFNDISLSHCHDVYERLGVSLTRKDVRGESTYNDDLEQVVKDLDAKGLLSESNGAKVVFQDEFKTKDGDPLPVIIQKADGGYLYATSDLAAMRYRSNVLKADRALYFVDLRQGLHFQQVFKLARTAEFINPDMSLEHMGFGTMNGDDGRPFKTRSGGVVKLVDLLTEADTRALELVRSKNPDMDQAELEKIAKVVGISSVKYADLSKNRASDYIFSFEQMLSFEGNTAPYLLYAYTRVAGIFKRATDIDLSDAKMQLDHDKEKDLGNKLAQFGEVLSRMVTKGQPHALCGYLFELAGAFSSFYEACPVLAAESEEQKKSRLLLSQLTAKTLKQGLDLLGIETLERM</sequence>
<dbReference type="EC" id="6.1.1.19" evidence="1"/>
<dbReference type="EMBL" id="CP000821">
    <property type="protein sequence ID" value="ABV35145.1"/>
    <property type="molecule type" value="Genomic_DNA"/>
</dbReference>
<dbReference type="RefSeq" id="WP_012140882.1">
    <property type="nucleotide sequence ID" value="NC_009831.1"/>
</dbReference>
<dbReference type="SMR" id="A8FQM2"/>
<dbReference type="STRING" id="425104.Ssed_0533"/>
<dbReference type="KEGG" id="sse:Ssed_0533"/>
<dbReference type="eggNOG" id="COG0018">
    <property type="taxonomic scope" value="Bacteria"/>
</dbReference>
<dbReference type="HOGENOM" id="CLU_006406_5_1_6"/>
<dbReference type="OrthoDB" id="9803211at2"/>
<dbReference type="Proteomes" id="UP000002015">
    <property type="component" value="Chromosome"/>
</dbReference>
<dbReference type="GO" id="GO:0005737">
    <property type="term" value="C:cytoplasm"/>
    <property type="evidence" value="ECO:0007669"/>
    <property type="project" value="UniProtKB-SubCell"/>
</dbReference>
<dbReference type="GO" id="GO:0004814">
    <property type="term" value="F:arginine-tRNA ligase activity"/>
    <property type="evidence" value="ECO:0007669"/>
    <property type="project" value="UniProtKB-UniRule"/>
</dbReference>
<dbReference type="GO" id="GO:0005524">
    <property type="term" value="F:ATP binding"/>
    <property type="evidence" value="ECO:0007669"/>
    <property type="project" value="UniProtKB-UniRule"/>
</dbReference>
<dbReference type="GO" id="GO:0006420">
    <property type="term" value="P:arginyl-tRNA aminoacylation"/>
    <property type="evidence" value="ECO:0007669"/>
    <property type="project" value="UniProtKB-UniRule"/>
</dbReference>
<dbReference type="CDD" id="cd07956">
    <property type="entry name" value="Anticodon_Ia_Arg"/>
    <property type="match status" value="1"/>
</dbReference>
<dbReference type="CDD" id="cd00671">
    <property type="entry name" value="ArgRS_core"/>
    <property type="match status" value="1"/>
</dbReference>
<dbReference type="FunFam" id="3.30.1360.70:FF:000003">
    <property type="entry name" value="Arginine--tRNA ligase"/>
    <property type="match status" value="1"/>
</dbReference>
<dbReference type="FunFam" id="3.40.50.620:FF:000030">
    <property type="entry name" value="Arginine--tRNA ligase"/>
    <property type="match status" value="1"/>
</dbReference>
<dbReference type="FunFam" id="1.10.730.10:FF:000006">
    <property type="entry name" value="Arginyl-tRNA synthetase 2, mitochondrial"/>
    <property type="match status" value="1"/>
</dbReference>
<dbReference type="Gene3D" id="3.30.1360.70">
    <property type="entry name" value="Arginyl tRNA synthetase N-terminal domain"/>
    <property type="match status" value="1"/>
</dbReference>
<dbReference type="Gene3D" id="3.40.50.620">
    <property type="entry name" value="HUPs"/>
    <property type="match status" value="1"/>
</dbReference>
<dbReference type="Gene3D" id="1.10.730.10">
    <property type="entry name" value="Isoleucyl-tRNA Synthetase, Domain 1"/>
    <property type="match status" value="1"/>
</dbReference>
<dbReference type="HAMAP" id="MF_00123">
    <property type="entry name" value="Arg_tRNA_synth"/>
    <property type="match status" value="1"/>
</dbReference>
<dbReference type="InterPro" id="IPR001412">
    <property type="entry name" value="aa-tRNA-synth_I_CS"/>
</dbReference>
<dbReference type="InterPro" id="IPR001278">
    <property type="entry name" value="Arg-tRNA-ligase"/>
</dbReference>
<dbReference type="InterPro" id="IPR005148">
    <property type="entry name" value="Arg-tRNA-synth_N"/>
</dbReference>
<dbReference type="InterPro" id="IPR036695">
    <property type="entry name" value="Arg-tRNA-synth_N_sf"/>
</dbReference>
<dbReference type="InterPro" id="IPR035684">
    <property type="entry name" value="ArgRS_core"/>
</dbReference>
<dbReference type="InterPro" id="IPR008909">
    <property type="entry name" value="DALR_anticod-bd"/>
</dbReference>
<dbReference type="InterPro" id="IPR014729">
    <property type="entry name" value="Rossmann-like_a/b/a_fold"/>
</dbReference>
<dbReference type="InterPro" id="IPR009080">
    <property type="entry name" value="tRNAsynth_Ia_anticodon-bd"/>
</dbReference>
<dbReference type="NCBIfam" id="TIGR00456">
    <property type="entry name" value="argS"/>
    <property type="match status" value="1"/>
</dbReference>
<dbReference type="PANTHER" id="PTHR11956:SF5">
    <property type="entry name" value="ARGININE--TRNA LIGASE, CYTOPLASMIC"/>
    <property type="match status" value="1"/>
</dbReference>
<dbReference type="PANTHER" id="PTHR11956">
    <property type="entry name" value="ARGINYL-TRNA SYNTHETASE"/>
    <property type="match status" value="1"/>
</dbReference>
<dbReference type="Pfam" id="PF03485">
    <property type="entry name" value="Arg_tRNA_synt_N"/>
    <property type="match status" value="1"/>
</dbReference>
<dbReference type="Pfam" id="PF05746">
    <property type="entry name" value="DALR_1"/>
    <property type="match status" value="1"/>
</dbReference>
<dbReference type="Pfam" id="PF00750">
    <property type="entry name" value="tRNA-synt_1d"/>
    <property type="match status" value="1"/>
</dbReference>
<dbReference type="PRINTS" id="PR01038">
    <property type="entry name" value="TRNASYNTHARG"/>
</dbReference>
<dbReference type="SMART" id="SM01016">
    <property type="entry name" value="Arg_tRNA_synt_N"/>
    <property type="match status" value="1"/>
</dbReference>
<dbReference type="SMART" id="SM00836">
    <property type="entry name" value="DALR_1"/>
    <property type="match status" value="1"/>
</dbReference>
<dbReference type="SUPFAM" id="SSF47323">
    <property type="entry name" value="Anticodon-binding domain of a subclass of class I aminoacyl-tRNA synthetases"/>
    <property type="match status" value="1"/>
</dbReference>
<dbReference type="SUPFAM" id="SSF55190">
    <property type="entry name" value="Arginyl-tRNA synthetase (ArgRS), N-terminal 'additional' domain"/>
    <property type="match status" value="1"/>
</dbReference>
<dbReference type="SUPFAM" id="SSF52374">
    <property type="entry name" value="Nucleotidylyl transferase"/>
    <property type="match status" value="1"/>
</dbReference>
<dbReference type="PROSITE" id="PS00178">
    <property type="entry name" value="AA_TRNA_LIGASE_I"/>
    <property type="match status" value="1"/>
</dbReference>
<evidence type="ECO:0000255" key="1">
    <source>
        <dbReference type="HAMAP-Rule" id="MF_00123"/>
    </source>
</evidence>